<sequence>DLWQFGQMILKETGKLPFPYYTYGGCYCGVGGRRGLGTKDDRCCYVHDCCYKKLTGCPKTDDRYSYSWLDLTIVCGEDDPCKELCECDKAIAVCFRENLGTYNKKYRYHLKPCKKADKPC</sequence>
<protein>
    <recommendedName>
        <fullName>Basic phospholipase A2 homolog piratoxin-3</fullName>
        <shortName>svPLA2 homolog</shortName>
    </recommendedName>
    <alternativeName>
        <fullName evidence="7">MP-III 4R</fullName>
    </alternativeName>
    <alternativeName>
        <fullName evidence="8">Piratoxin-III</fullName>
        <shortName evidence="8">PrTX-III</shortName>
    </alternativeName>
</protein>
<keyword id="KW-0002">3D-structure</keyword>
<keyword id="KW-1203">Blood coagulation cascade inhibiting toxin</keyword>
<keyword id="KW-0903">Direct protein sequencing</keyword>
<keyword id="KW-1015">Disulfide bond</keyword>
<keyword id="KW-1199">Hemostasis impairing toxin</keyword>
<keyword id="KW-0959">Myotoxin</keyword>
<keyword id="KW-0964">Secreted</keyword>
<keyword id="KW-0800">Toxin</keyword>
<dbReference type="PDB" id="1GMZ">
    <property type="method" value="X-ray"/>
    <property type="resolution" value="2.40 A"/>
    <property type="chains" value="A/B=1-120"/>
</dbReference>
<dbReference type="PDBsum" id="1GMZ"/>
<dbReference type="SMR" id="P58464"/>
<dbReference type="EvolutionaryTrace" id="P58464"/>
<dbReference type="GO" id="GO:0005576">
    <property type="term" value="C:extracellular region"/>
    <property type="evidence" value="ECO:0007669"/>
    <property type="project" value="UniProtKB-SubCell"/>
</dbReference>
<dbReference type="GO" id="GO:0005509">
    <property type="term" value="F:calcium ion binding"/>
    <property type="evidence" value="ECO:0007669"/>
    <property type="project" value="InterPro"/>
</dbReference>
<dbReference type="GO" id="GO:0047498">
    <property type="term" value="F:calcium-dependent phospholipase A2 activity"/>
    <property type="evidence" value="ECO:0007669"/>
    <property type="project" value="TreeGrafter"/>
</dbReference>
<dbReference type="GO" id="GO:0005543">
    <property type="term" value="F:phospholipid binding"/>
    <property type="evidence" value="ECO:0007669"/>
    <property type="project" value="TreeGrafter"/>
</dbReference>
<dbReference type="GO" id="GO:0090729">
    <property type="term" value="F:toxin activity"/>
    <property type="evidence" value="ECO:0007669"/>
    <property type="project" value="UniProtKB-KW"/>
</dbReference>
<dbReference type="GO" id="GO:0050482">
    <property type="term" value="P:arachidonate secretion"/>
    <property type="evidence" value="ECO:0007669"/>
    <property type="project" value="InterPro"/>
</dbReference>
<dbReference type="GO" id="GO:0016042">
    <property type="term" value="P:lipid catabolic process"/>
    <property type="evidence" value="ECO:0007669"/>
    <property type="project" value="InterPro"/>
</dbReference>
<dbReference type="GO" id="GO:0006644">
    <property type="term" value="P:phospholipid metabolic process"/>
    <property type="evidence" value="ECO:0007669"/>
    <property type="project" value="InterPro"/>
</dbReference>
<dbReference type="FunFam" id="1.20.90.10:FF:000001">
    <property type="entry name" value="Basic phospholipase A2 homolog"/>
    <property type="match status" value="1"/>
</dbReference>
<dbReference type="Gene3D" id="1.20.90.10">
    <property type="entry name" value="Phospholipase A2 domain"/>
    <property type="match status" value="1"/>
</dbReference>
<dbReference type="InterPro" id="IPR001211">
    <property type="entry name" value="PLipase_A2"/>
</dbReference>
<dbReference type="InterPro" id="IPR033112">
    <property type="entry name" value="PLipase_A2_Asp_AS"/>
</dbReference>
<dbReference type="InterPro" id="IPR016090">
    <property type="entry name" value="PLipase_A2_dom"/>
</dbReference>
<dbReference type="InterPro" id="IPR036444">
    <property type="entry name" value="PLipase_A2_dom_sf"/>
</dbReference>
<dbReference type="InterPro" id="IPR033113">
    <property type="entry name" value="PLipase_A2_His_AS"/>
</dbReference>
<dbReference type="PANTHER" id="PTHR11716:SF101">
    <property type="entry name" value="BASIC PHOSPHOLIPASE A2 PA-11-LIKE"/>
    <property type="match status" value="1"/>
</dbReference>
<dbReference type="PANTHER" id="PTHR11716">
    <property type="entry name" value="PHOSPHOLIPASE A2 FAMILY MEMBER"/>
    <property type="match status" value="1"/>
</dbReference>
<dbReference type="Pfam" id="PF00068">
    <property type="entry name" value="Phospholip_A2_1"/>
    <property type="match status" value="1"/>
</dbReference>
<dbReference type="PRINTS" id="PR00389">
    <property type="entry name" value="PHPHLIPASEA2"/>
</dbReference>
<dbReference type="SMART" id="SM00085">
    <property type="entry name" value="PA2c"/>
    <property type="match status" value="1"/>
</dbReference>
<dbReference type="SUPFAM" id="SSF48619">
    <property type="entry name" value="Phospholipase A2, PLA2"/>
    <property type="match status" value="1"/>
</dbReference>
<dbReference type="PROSITE" id="PS00119">
    <property type="entry name" value="PA2_ASP"/>
    <property type="match status" value="1"/>
</dbReference>
<dbReference type="PROSITE" id="PS00118">
    <property type="entry name" value="PA2_HIS"/>
    <property type="match status" value="1"/>
</dbReference>
<organism>
    <name type="scientific">Bothrops pirajai</name>
    <name type="common">Piraja's lancehead</name>
    <dbReference type="NCBI Taxonomy" id="113192"/>
    <lineage>
        <taxon>Eukaryota</taxon>
        <taxon>Metazoa</taxon>
        <taxon>Chordata</taxon>
        <taxon>Craniata</taxon>
        <taxon>Vertebrata</taxon>
        <taxon>Euteleostomi</taxon>
        <taxon>Lepidosauria</taxon>
        <taxon>Squamata</taxon>
        <taxon>Bifurcata</taxon>
        <taxon>Unidentata</taxon>
        <taxon>Episquamata</taxon>
        <taxon>Toxicofera</taxon>
        <taxon>Serpentes</taxon>
        <taxon>Colubroidea</taxon>
        <taxon>Viperidae</taxon>
        <taxon>Crotalinae</taxon>
        <taxon>Bothrops</taxon>
    </lineage>
</organism>
<evidence type="ECO:0000250" key="1">
    <source>
        <dbReference type="UniProtKB" id="I6L8L6"/>
    </source>
</evidence>
<evidence type="ECO:0000250" key="2">
    <source>
        <dbReference type="UniProtKB" id="P20474"/>
    </source>
</evidence>
<evidence type="ECO:0000250" key="3">
    <source>
        <dbReference type="UniProtKB" id="P24605"/>
    </source>
</evidence>
<evidence type="ECO:0000250" key="4">
    <source>
        <dbReference type="UniProtKB" id="P45881"/>
    </source>
</evidence>
<evidence type="ECO:0000269" key="5">
    <source>
    </source>
</evidence>
<evidence type="ECO:0000269" key="6">
    <source>
    </source>
</evidence>
<evidence type="ECO:0000303" key="7">
    <source>
    </source>
</evidence>
<evidence type="ECO:0000303" key="8">
    <source>
    </source>
</evidence>
<evidence type="ECO:0000305" key="9"/>
<evidence type="ECO:0000305" key="10">
    <source>
    </source>
</evidence>
<evidence type="ECO:0000305" key="11">
    <source>
    </source>
</evidence>
<evidence type="ECO:0000312" key="12">
    <source>
        <dbReference type="PDB" id="1GMZ"/>
    </source>
</evidence>
<evidence type="ECO:0007744" key="13">
    <source>
        <dbReference type="PDB" id="1GMZ"/>
    </source>
</evidence>
<evidence type="ECO:0007829" key="14">
    <source>
        <dbReference type="PDB" id="1GMZ"/>
    </source>
</evidence>
<accession>P58464</accession>
<comment type="function">
    <text evidence="1 5">Snake venom phospholipase A2 (PLA2) that lacks enzymatic activity. Shows high myotoxin activities (PubMed:10395455). Also has anticoagulant activity (PubMed:10395455). A model of myotoxic mechanism has been proposed: an apo Lys49-PLA2 is activated by the entrance of a hydrophobic molecule (e.g. fatty acid) at the hydrophobic channel of the protein leading to a reorientation of a monomer (By similarity). This reorientation causes a transition between 'inactive' to 'active' states, causing alignment of C-terminal and membrane-docking sites (MDoS) side-by-side and putting the membrane-disruption sites (MDiS) in the same plane, exposed to solvent and in a symmetric position for both monomers (By similarity). The MDoS region stabilizes the toxin on membrane by the interaction of charged residues with phospholipid head groups (By similarity). Subsequently, the MDiS region destabilizes the membrane with penetration of hydrophobic residues (By similarity). This insertion causes a disorganization of the membrane, allowing an uncontrolled influx of ions (i.e. calcium and sodium), and eventually triggering irreversible intracellular alterations and cell death (By similarity).</text>
</comment>
<comment type="subunit">
    <text evidence="4 6">Homodimer; non-covalently linked (probable alternative/compact dimer conformation).</text>
</comment>
<comment type="subcellular location">
    <subcellularLocation>
        <location evidence="5">Secreted</location>
    </subcellularLocation>
</comment>
<comment type="tissue specificity">
    <text evidence="10">Expressed by the venom gland.</text>
</comment>
<comment type="similarity">
    <text evidence="9">Belongs to the phospholipase A2 family. Group II subfamily. D49 sub-subfamily.</text>
</comment>
<comment type="caution">
    <text evidence="11">Shows no or low enzymatic activity even tough it conserves the catalytic residues. This may be due to the distorsion of the calcium binding loop.</text>
</comment>
<reference key="1">
    <citation type="journal article" date="1999" name="J. Protein Chem.">
        <title>Purification and amino acid sequence of MP-III 4R D49 phospholipase A2 from Bothrops pirajai snake venom, a toxin with moderate PLA2 and anticoagulant activities and high myotoxic activity.</title>
        <authorList>
            <person name="Toyama M.H."/>
            <person name="Costa P.D."/>
            <person name="Novello J.C."/>
            <person name="de Oliveira B."/>
            <person name="Giglio J.R."/>
            <person name="da Cruz-Hofling M.A."/>
            <person name="Marangoni S."/>
        </authorList>
    </citation>
    <scope>PROTEIN SEQUENCE</scope>
    <scope>FUNCTION</scope>
    <scope>SUBCELLULAR LOCATION</scope>
    <source>
        <tissue>Venom</tissue>
    </source>
</reference>
<reference key="2">
    <citation type="journal article" date="2013" name="J. Proteomics">
        <title>Proteomic analysis of Bothrops pirajai snake venom and characterization of BpirMP, a new P-I metalloproteinase.</title>
        <authorList>
            <person name="Bernardes C.P."/>
            <person name="Menaldo D.L."/>
            <person name="Camacho E."/>
            <person name="Rosa J.C."/>
            <person name="Escalante T."/>
            <person name="Rucavado A."/>
            <person name="Lomonte B."/>
            <person name="Gutierrez J.M."/>
            <person name="Sampaio S.V."/>
        </authorList>
    </citation>
    <scope>IDENTIFICATION BY MASS SPECTROMETRY</scope>
</reference>
<reference evidence="12" key="3">
    <citation type="journal article" date="2003" name="Acta Crystallogr. D">
        <title>The structure of the D49 phospholipase A2 piratoxin III from Bothrops pirajai reveals unprecedented structural displacement of the calcium-binding loop: possible relationship to cooperative substrate binding.</title>
        <authorList>
            <person name="Rigden D.J."/>
            <person name="Hwa L.W."/>
            <person name="Marangoni S."/>
            <person name="Toyama M.H."/>
            <person name="Polikarpov I."/>
        </authorList>
    </citation>
    <scope>X-RAY CRYSTALLOGRAPHY (2.4 ANGSTROMS) OF 1-106</scope>
    <scope>DISULFIDE BONDS</scope>
</reference>
<proteinExistence type="evidence at protein level"/>
<feature type="chain" id="PRO_0000161629" description="Basic phospholipase A2 homolog piratoxin-3">
    <location>
        <begin position="1"/>
        <end position="120"/>
    </location>
</feature>
<feature type="region of interest" description="Important for membrane-damaging activities in eukaryotes and bacteria; heparin-binding" evidence="3">
    <location>
        <begin position="104"/>
        <end position="115"/>
    </location>
</feature>
<feature type="site" description="Putative membrane-disrupting site (MDiS)" evidence="2">
    <location>
        <position position="3"/>
    </location>
</feature>
<feature type="site" description="Putative membrane-disrupting site (MDiS)" evidence="2">
    <location>
        <position position="10"/>
    </location>
</feature>
<feature type="site" description="Putative membrane-disrupting site (MDiS)" evidence="2">
    <location>
        <position position="15"/>
    </location>
</feature>
<feature type="site" description="Putative membrane-disrupting site (MDiS)" evidence="2">
    <location>
        <position position="16"/>
    </location>
</feature>
<feature type="site" description="Putative cationic membrane-docking site (MDoS)" evidence="2">
    <location>
        <position position="63"/>
    </location>
</feature>
<feature type="site" description="Important residue of the cationic membrane-docking site (MDoS)" evidence="1">
    <location>
        <position position="104"/>
    </location>
</feature>
<feature type="site" description="Important residue of the cationic membrane-docking site (MDoS)" evidence="1">
    <location>
        <position position="107"/>
    </location>
</feature>
<feature type="site" description="Hydrophobic membrane-disruption site (MDiS)" evidence="1">
    <location>
        <position position="110"/>
    </location>
</feature>
<feature type="site" description="Cationic membrane-docking site (MDoS)" evidence="1">
    <location>
        <position position="111"/>
    </location>
</feature>
<feature type="disulfide bond" evidence="6 13">
    <location>
        <begin position="26"/>
        <end position="113"/>
    </location>
</feature>
<feature type="disulfide bond" evidence="6 13">
    <location>
        <begin position="28"/>
        <end position="44"/>
    </location>
</feature>
<feature type="disulfide bond" evidence="6 13">
    <location>
        <begin position="43"/>
        <end position="94"/>
    </location>
</feature>
<feature type="disulfide bond" evidence="6 13">
    <location>
        <begin position="49"/>
        <end position="120"/>
    </location>
</feature>
<feature type="disulfide bond" evidence="6 13">
    <location>
        <begin position="50"/>
        <end position="87"/>
    </location>
</feature>
<feature type="disulfide bond" evidence="6 13">
    <location>
        <begin position="57"/>
        <end position="81"/>
    </location>
</feature>
<feature type="disulfide bond" evidence="6 13">
    <location>
        <begin position="75"/>
        <end position="85"/>
    </location>
</feature>
<feature type="helix" evidence="14">
    <location>
        <begin position="2"/>
        <end position="13"/>
    </location>
</feature>
<feature type="helix" evidence="14">
    <location>
        <begin position="17"/>
        <end position="20"/>
    </location>
</feature>
<feature type="turn" evidence="14">
    <location>
        <begin position="21"/>
        <end position="23"/>
    </location>
</feature>
<feature type="turn" evidence="14">
    <location>
        <begin position="25"/>
        <end position="27"/>
    </location>
</feature>
<feature type="helix" evidence="14">
    <location>
        <begin position="28"/>
        <end position="30"/>
    </location>
</feature>
<feature type="helix" evidence="14">
    <location>
        <begin position="39"/>
        <end position="52"/>
    </location>
</feature>
<feature type="turn" evidence="14">
    <location>
        <begin position="58"/>
        <end position="60"/>
    </location>
</feature>
<feature type="helix" evidence="14">
    <location>
        <begin position="80"/>
        <end position="97"/>
    </location>
</feature>
<feature type="helix" evidence="14">
    <location>
        <begin position="99"/>
        <end position="101"/>
    </location>
</feature>
<feature type="helix" evidence="14">
    <location>
        <begin position="104"/>
        <end position="106"/>
    </location>
</feature>
<name>PA2H3_BOTPI</name>